<keyword id="KW-0004">4Fe-4S</keyword>
<keyword id="KW-0963">Cytoplasm</keyword>
<keyword id="KW-1015">Disulfide bond</keyword>
<keyword id="KW-0238">DNA-binding</keyword>
<keyword id="KW-0408">Iron</keyword>
<keyword id="KW-0411">Iron-sulfur</keyword>
<keyword id="KW-0479">Metal-binding</keyword>
<keyword id="KW-1185">Reference proteome</keyword>
<keyword id="KW-0804">Transcription</keyword>
<keyword id="KW-0805">Transcription regulation</keyword>
<keyword id="KW-0843">Virulence</keyword>
<organism>
    <name type="scientific">Mycobacterium tuberculosis (strain CDC 1551 / Oshkosh)</name>
    <dbReference type="NCBI Taxonomy" id="83331"/>
    <lineage>
        <taxon>Bacteria</taxon>
        <taxon>Bacillati</taxon>
        <taxon>Actinomycetota</taxon>
        <taxon>Actinomycetes</taxon>
        <taxon>Mycobacteriales</taxon>
        <taxon>Mycobacteriaceae</taxon>
        <taxon>Mycobacterium</taxon>
        <taxon>Mycobacterium tuberculosis complex</taxon>
    </lineage>
</organism>
<comment type="function">
    <text evidence="1">A redox-sensitive transcriptional regulator. Maintains intracellular redox homeostasis by regulating catabolic metabolism and polyketide biosynthesis. Regulates expression of the redox buffer ergothioneine (ERG). In concert with myothiol (MSH), another redox buffer, responds to low pH leading to acid resistance. Senses changes in the intracellular redox state and helps mediate a metabolic switchover to preferred in vivo carbon sources (fatty acids). The apo- but not holo-form probably binds DNA (By similarity).</text>
</comment>
<comment type="cofactor">
    <cofactor evidence="1">
        <name>[4Fe-4S] cluster</name>
        <dbReference type="ChEBI" id="CHEBI:49883"/>
    </cofactor>
    <text evidence="1">Binds 1 [4Fe-4S] cluster per subunit. Following nitrosylation of the [4Fe-4S] cluster binds 1 [4Fe-8(NO)] cluster per subunit.</text>
</comment>
<comment type="subunit">
    <text evidence="5">Homodimer.</text>
</comment>
<comment type="subcellular location">
    <subcellularLocation>
        <location evidence="2">Cytoplasm</location>
    </subcellularLocation>
</comment>
<comment type="induction">
    <text evidence="3 4">Strongly expressed upon entry into stationary phase, 12-fold induced at pH 4.5, 10-fold induced by streptomycin, 2-fold by starvation and by ethanol (PubMed:16870781). Repressed during iron-starvation (PubMed:16870781). Slightly induced by hypoxia and cAMP, 9-fold by NO (PubMed:22829866). Only slightly induced in macrophage and mouse infection (PubMed:22829866).</text>
</comment>
<comment type="PTM">
    <text evidence="1">The Fe-S cluster can be nitrosylated by nitric oxide (NO).</text>
</comment>
<comment type="PTM">
    <text evidence="1">Upon Fe-S cluster removal intramolecular disulfide bonds are formed.</text>
</comment>
<comment type="similarity">
    <text evidence="5">Belongs to the WhiB family.</text>
</comment>
<feature type="chain" id="PRO_0000428605" description="Redox- and pH-responsive transcriptional regulator WhiB3">
    <location>
        <begin position="1"/>
        <end position="102"/>
    </location>
</feature>
<feature type="domain" description="4Fe-4S Wbl-type">
    <location>
        <begin position="22"/>
        <end position="86"/>
    </location>
</feature>
<feature type="binding site" evidence="1">
    <location>
        <position position="23"/>
    </location>
    <ligand>
        <name>[4Fe-4S] cluster</name>
        <dbReference type="ChEBI" id="CHEBI:49883"/>
    </ligand>
</feature>
<feature type="binding site" evidence="1">
    <location>
        <position position="53"/>
    </location>
    <ligand>
        <name>[4Fe-4S] cluster</name>
        <dbReference type="ChEBI" id="CHEBI:49883"/>
    </ligand>
</feature>
<feature type="binding site" evidence="1">
    <location>
        <position position="56"/>
    </location>
    <ligand>
        <name>[4Fe-4S] cluster</name>
        <dbReference type="ChEBI" id="CHEBI:49883"/>
    </ligand>
</feature>
<feature type="binding site" evidence="1">
    <location>
        <position position="62"/>
    </location>
    <ligand>
        <name>[4Fe-4S] cluster</name>
        <dbReference type="ChEBI" id="CHEBI:49883"/>
    </ligand>
</feature>
<protein>
    <recommendedName>
        <fullName>Redox- and pH-responsive transcriptional regulator WhiB3</fullName>
    </recommendedName>
</protein>
<dbReference type="EMBL" id="AE000516">
    <property type="protein sequence ID" value="AAK47863.1"/>
    <property type="molecule type" value="Genomic_DNA"/>
</dbReference>
<dbReference type="PIR" id="E70737">
    <property type="entry name" value="E70737"/>
</dbReference>
<dbReference type="RefSeq" id="WP_003418017.1">
    <property type="nucleotide sequence ID" value="NZ_KK341227.1"/>
</dbReference>
<dbReference type="SMR" id="P9WF40"/>
<dbReference type="GeneID" id="45427412"/>
<dbReference type="KEGG" id="mtc:MT3525"/>
<dbReference type="PATRIC" id="fig|83331.31.peg.3782"/>
<dbReference type="HOGENOM" id="CLU_106245_6_0_11"/>
<dbReference type="Proteomes" id="UP000001020">
    <property type="component" value="Chromosome"/>
</dbReference>
<dbReference type="GO" id="GO:0005737">
    <property type="term" value="C:cytoplasm"/>
    <property type="evidence" value="ECO:0007669"/>
    <property type="project" value="UniProtKB-SubCell"/>
</dbReference>
<dbReference type="GO" id="GO:0051539">
    <property type="term" value="F:4 iron, 4 sulfur cluster binding"/>
    <property type="evidence" value="ECO:0007669"/>
    <property type="project" value="UniProtKB-UniRule"/>
</dbReference>
<dbReference type="GO" id="GO:0035731">
    <property type="term" value="F:dinitrosyl-iron complex binding"/>
    <property type="evidence" value="ECO:0007669"/>
    <property type="project" value="UniProtKB-UniRule"/>
</dbReference>
<dbReference type="GO" id="GO:0003677">
    <property type="term" value="F:DNA binding"/>
    <property type="evidence" value="ECO:0007669"/>
    <property type="project" value="UniProtKB-UniRule"/>
</dbReference>
<dbReference type="GO" id="GO:0046872">
    <property type="term" value="F:metal ion binding"/>
    <property type="evidence" value="ECO:0007669"/>
    <property type="project" value="UniProtKB-KW"/>
</dbReference>
<dbReference type="GO" id="GO:0047134">
    <property type="term" value="F:protein-disulfide reductase [NAD(P)H] activity"/>
    <property type="evidence" value="ECO:0007669"/>
    <property type="project" value="TreeGrafter"/>
</dbReference>
<dbReference type="GO" id="GO:0045454">
    <property type="term" value="P:cell redox homeostasis"/>
    <property type="evidence" value="ECO:0007669"/>
    <property type="project" value="TreeGrafter"/>
</dbReference>
<dbReference type="GO" id="GO:0045892">
    <property type="term" value="P:negative regulation of DNA-templated transcription"/>
    <property type="evidence" value="ECO:0007669"/>
    <property type="project" value="TreeGrafter"/>
</dbReference>
<dbReference type="HAMAP" id="MF_01479">
    <property type="entry name" value="WhiB"/>
    <property type="match status" value="1"/>
</dbReference>
<dbReference type="InterPro" id="IPR034768">
    <property type="entry name" value="4FE4S_WBL"/>
</dbReference>
<dbReference type="InterPro" id="IPR003482">
    <property type="entry name" value="Whib"/>
</dbReference>
<dbReference type="PANTHER" id="PTHR38839:SF5">
    <property type="entry name" value="TRANSCRIPTIONAL REGULATOR WHID"/>
    <property type="match status" value="1"/>
</dbReference>
<dbReference type="PANTHER" id="PTHR38839">
    <property type="entry name" value="TRANSCRIPTIONAL REGULATOR WHID-RELATED"/>
    <property type="match status" value="1"/>
</dbReference>
<dbReference type="Pfam" id="PF02467">
    <property type="entry name" value="Whib"/>
    <property type="match status" value="1"/>
</dbReference>
<dbReference type="PROSITE" id="PS51674">
    <property type="entry name" value="4FE4S_WBL"/>
    <property type="match status" value="1"/>
</dbReference>
<name>WHIB3_MYCTO</name>
<evidence type="ECO:0000250" key="1">
    <source>
        <dbReference type="UniProtKB" id="P9WF41"/>
    </source>
</evidence>
<evidence type="ECO:0000250" key="2">
    <source>
        <dbReference type="UniProtKB" id="Q9S426"/>
    </source>
</evidence>
<evidence type="ECO:0000269" key="3">
    <source>
    </source>
</evidence>
<evidence type="ECO:0000269" key="4">
    <source>
    </source>
</evidence>
<evidence type="ECO:0000305" key="5"/>
<accession>P9WF40</accession>
<accession>F2GEG1</accession>
<accession>L0TCG8</accession>
<accession>Q50710</accession>
<accession>Q7D5K3</accession>
<reference key="1">
    <citation type="journal article" date="2002" name="J. Bacteriol.">
        <title>Whole-genome comparison of Mycobacterium tuberculosis clinical and laboratory strains.</title>
        <authorList>
            <person name="Fleischmann R.D."/>
            <person name="Alland D."/>
            <person name="Eisen J.A."/>
            <person name="Carpenter L."/>
            <person name="White O."/>
            <person name="Peterson J.D."/>
            <person name="DeBoy R.T."/>
            <person name="Dodson R.J."/>
            <person name="Gwinn M.L."/>
            <person name="Haft D.H."/>
            <person name="Hickey E.K."/>
            <person name="Kolonay J.F."/>
            <person name="Nelson W.C."/>
            <person name="Umayam L.A."/>
            <person name="Ermolaeva M.D."/>
            <person name="Salzberg S.L."/>
            <person name="Delcher A."/>
            <person name="Utterback T.R."/>
            <person name="Weidman J.F."/>
            <person name="Khouri H.M."/>
            <person name="Gill J."/>
            <person name="Mikula A."/>
            <person name="Bishai W."/>
            <person name="Jacobs W.R. Jr."/>
            <person name="Venter J.C."/>
            <person name="Fraser C.M."/>
        </authorList>
    </citation>
    <scope>NUCLEOTIDE SEQUENCE [LARGE SCALE GENOMIC DNA]</scope>
    <source>
        <strain>CDC 1551 / Oshkosh</strain>
    </source>
</reference>
<reference key="2">
    <citation type="journal article" date="2006" name="Antimicrob. Agents Chemother.">
        <title>Differential gene expression in response to exposure to antimycobacterial agents and other stress conditions among seven Mycobacterium tuberculosis whiB-like genes.</title>
        <authorList>
            <person name="Geiman D.E."/>
            <person name="Raghunand T.R."/>
            <person name="Agarwal N."/>
            <person name="Bishai W.R."/>
        </authorList>
    </citation>
    <scope>INDUCTION</scope>
    <source>
        <strain>CDC 1551 / Oshkosh</strain>
    </source>
</reference>
<reference key="3">
    <citation type="journal article" date="2012" name="PLoS ONE">
        <title>Gene expression of Mycobacterium tuberculosis putative transcription factors whiB1-7 in redox environments.</title>
        <authorList>
            <person name="Larsson C."/>
            <person name="Luna B."/>
            <person name="Ammerman N.C."/>
            <person name="Maiga M."/>
            <person name="Agarwal N."/>
            <person name="Bishai W.R."/>
        </authorList>
    </citation>
    <scope>INDUCTION</scope>
    <source>
        <strain>CDC 1551 / Oshkosh</strain>
    </source>
</reference>
<proteinExistence type="evidence at transcript level"/>
<gene>
    <name type="primary">whiB3</name>
    <name type="ordered locus">MT3525</name>
</gene>
<sequence length="102" mass="11612">MPQPEQLPGPNADIWNWQLQGLCRGMDSSMFFHPDGERGRARTQREQRAKEMCRRCPVIEACRSHALEVGEPYGVWGGLSESERDLLLKGTMGRTRGIRRTA</sequence>